<gene>
    <name evidence="5" type="primary">CPN10-2</name>
    <name evidence="4" type="synonym">CPN10</name>
    <name evidence="6" type="ordered locus">At2g44650</name>
</gene>
<comment type="function">
    <text evidence="2">Functions as a co-chaperone for protein folding in chloroplasts.</text>
</comment>
<comment type="subcellular location">
    <subcellularLocation>
        <location evidence="2">Plastid</location>
        <location evidence="2">Chloroplast stroma</location>
    </subcellularLocation>
</comment>
<comment type="tissue specificity">
    <text evidence="2 3">Expressed in leaves and stems (PubMed:11402030). Expressed at low levels in germinating seeds, seedlings, rosettes leaves, flowers and siliques (PubMed:23783410).</text>
</comment>
<comment type="similarity">
    <text evidence="5">Belongs to the GroES chaperonin family.</text>
</comment>
<dbReference type="EMBL" id="AB051163">
    <property type="protein sequence ID" value="BAB55457.1"/>
    <property type="molecule type" value="mRNA"/>
</dbReference>
<dbReference type="EMBL" id="AC003672">
    <property type="protein sequence ID" value="AAC27467.1"/>
    <property type="molecule type" value="Genomic_DNA"/>
</dbReference>
<dbReference type="EMBL" id="CP002685">
    <property type="protein sequence ID" value="AEC10451.1"/>
    <property type="molecule type" value="Genomic_DNA"/>
</dbReference>
<dbReference type="EMBL" id="AF386970">
    <property type="protein sequence ID" value="AAK62415.1"/>
    <property type="molecule type" value="mRNA"/>
</dbReference>
<dbReference type="EMBL" id="AY072530">
    <property type="protein sequence ID" value="AAL66945.1"/>
    <property type="molecule type" value="mRNA"/>
</dbReference>
<dbReference type="PIR" id="T01592">
    <property type="entry name" value="T01592"/>
</dbReference>
<dbReference type="SMR" id="O80504"/>
<dbReference type="FunCoup" id="O80504">
    <property type="interactions" value="1072"/>
</dbReference>
<dbReference type="STRING" id="3702.O80504"/>
<dbReference type="PaxDb" id="3702-AT2G44650.1"/>
<dbReference type="ProteomicsDB" id="224476"/>
<dbReference type="EnsemblPlants" id="AT2G44650.1">
    <property type="protein sequence ID" value="AT2G44650.1"/>
    <property type="gene ID" value="AT2G44650"/>
</dbReference>
<dbReference type="GeneID" id="819073"/>
<dbReference type="Gramene" id="AT2G44650.1">
    <property type="protein sequence ID" value="AT2G44650.1"/>
    <property type="gene ID" value="AT2G44650"/>
</dbReference>
<dbReference type="KEGG" id="ath:AT2G44650"/>
<dbReference type="Araport" id="AT2G44650"/>
<dbReference type="TAIR" id="AT2G44650">
    <property type="gene designation" value="CHL-CPN10"/>
</dbReference>
<dbReference type="eggNOG" id="KOG1641">
    <property type="taxonomic scope" value="Eukaryota"/>
</dbReference>
<dbReference type="HOGENOM" id="CLU_119260_0_0_1"/>
<dbReference type="InParanoid" id="O80504"/>
<dbReference type="OMA" id="AFPVKTT"/>
<dbReference type="OrthoDB" id="184876at2759"/>
<dbReference type="PhylomeDB" id="O80504"/>
<dbReference type="PRO" id="PR:O80504"/>
<dbReference type="Proteomes" id="UP000006548">
    <property type="component" value="Chromosome 2"/>
</dbReference>
<dbReference type="ExpressionAtlas" id="O80504">
    <property type="expression patterns" value="baseline and differential"/>
</dbReference>
<dbReference type="GO" id="GO:0009507">
    <property type="term" value="C:chloroplast"/>
    <property type="evidence" value="ECO:0007005"/>
    <property type="project" value="TAIR"/>
</dbReference>
<dbReference type="GO" id="GO:0009941">
    <property type="term" value="C:chloroplast envelope"/>
    <property type="evidence" value="ECO:0007005"/>
    <property type="project" value="TAIR"/>
</dbReference>
<dbReference type="GO" id="GO:0009570">
    <property type="term" value="C:chloroplast stroma"/>
    <property type="evidence" value="ECO:0000314"/>
    <property type="project" value="TAIR"/>
</dbReference>
<dbReference type="GO" id="GO:0005829">
    <property type="term" value="C:cytosol"/>
    <property type="evidence" value="ECO:0007005"/>
    <property type="project" value="TAIR"/>
</dbReference>
<dbReference type="GO" id="GO:0005524">
    <property type="term" value="F:ATP binding"/>
    <property type="evidence" value="ECO:0007669"/>
    <property type="project" value="InterPro"/>
</dbReference>
<dbReference type="GO" id="GO:0019904">
    <property type="term" value="F:protein domain specific binding"/>
    <property type="evidence" value="ECO:0000353"/>
    <property type="project" value="CAFA"/>
</dbReference>
<dbReference type="GO" id="GO:0044183">
    <property type="term" value="F:protein folding chaperone"/>
    <property type="evidence" value="ECO:0007669"/>
    <property type="project" value="InterPro"/>
</dbReference>
<dbReference type="GO" id="GO:0006457">
    <property type="term" value="P:protein folding"/>
    <property type="evidence" value="ECO:0000314"/>
    <property type="project" value="TAIR"/>
</dbReference>
<dbReference type="CDD" id="cd00320">
    <property type="entry name" value="cpn10"/>
    <property type="match status" value="1"/>
</dbReference>
<dbReference type="FunFam" id="2.30.33.40:FF:000008">
    <property type="entry name" value="10 kDa chaperonin"/>
    <property type="match status" value="1"/>
</dbReference>
<dbReference type="Gene3D" id="2.30.33.40">
    <property type="entry name" value="GroES chaperonin"/>
    <property type="match status" value="1"/>
</dbReference>
<dbReference type="InterPro" id="IPR020818">
    <property type="entry name" value="Chaperonin_GroES"/>
</dbReference>
<dbReference type="InterPro" id="IPR037124">
    <property type="entry name" value="Chaperonin_GroES_sf"/>
</dbReference>
<dbReference type="InterPro" id="IPR011032">
    <property type="entry name" value="GroES-like_sf"/>
</dbReference>
<dbReference type="PANTHER" id="PTHR10772:SF13">
    <property type="entry name" value="10 KDA CHAPERONIN 1, CHLOROPLASTIC-RELATED"/>
    <property type="match status" value="1"/>
</dbReference>
<dbReference type="PANTHER" id="PTHR10772">
    <property type="entry name" value="10 KDA HEAT SHOCK PROTEIN"/>
    <property type="match status" value="1"/>
</dbReference>
<dbReference type="Pfam" id="PF00166">
    <property type="entry name" value="Cpn10"/>
    <property type="match status" value="1"/>
</dbReference>
<dbReference type="SMART" id="SM00883">
    <property type="entry name" value="Cpn10"/>
    <property type="match status" value="1"/>
</dbReference>
<dbReference type="SUPFAM" id="SSF50129">
    <property type="entry name" value="GroES-like"/>
    <property type="match status" value="1"/>
</dbReference>
<sequence length="139" mass="15049">MASTFVCSLPNPFFAFPVKATTPSTANHTLLGSRRGCLRIKAISTKWEPTKVVPQADRVLVRLEDLPIKSSGGVLLPKAAVKFERYLTGEIISVGSEVGQQVGPGKRVLFSDVSAYEVDLGTDARHCFCKESDLLALVE</sequence>
<accession>O80504</accession>
<accession>Q94F15</accession>
<evidence type="ECO:0000255" key="1"/>
<evidence type="ECO:0000269" key="2">
    <source>
    </source>
</evidence>
<evidence type="ECO:0000269" key="3">
    <source>
    </source>
</evidence>
<evidence type="ECO:0000303" key="4">
    <source>
    </source>
</evidence>
<evidence type="ECO:0000305" key="5"/>
<evidence type="ECO:0000312" key="6">
    <source>
        <dbReference type="Araport" id="AT2G44650"/>
    </source>
</evidence>
<name>CH102_ARATH</name>
<keyword id="KW-0143">Chaperone</keyword>
<keyword id="KW-0150">Chloroplast</keyword>
<keyword id="KW-0934">Plastid</keyword>
<keyword id="KW-1185">Reference proteome</keyword>
<keyword id="KW-0809">Transit peptide</keyword>
<proteinExistence type="evidence at transcript level"/>
<protein>
    <recommendedName>
        <fullName evidence="5">10 kDa chaperonin 2, chloroplastic</fullName>
    </recommendedName>
    <alternativeName>
        <fullName evidence="4">Chloroplast chaperonin 10</fullName>
        <shortName evidence="4">Chl-Cpn10</shortName>
    </alternativeName>
</protein>
<feature type="transit peptide" description="Chloroplast" evidence="1">
    <location>
        <begin position="1"/>
        <end position="39"/>
    </location>
</feature>
<feature type="chain" id="PRO_0000438194" description="10 kDa chaperonin 2, chloroplastic">
    <location>
        <begin position="40"/>
        <end position="139"/>
    </location>
</feature>
<feature type="region of interest" description="Cpn-10 domain" evidence="5">
    <location>
        <begin position="51"/>
        <end position="138"/>
    </location>
</feature>
<feature type="sequence conflict" description="In Ref. 4; AAK62415/AAL66945." evidence="5" ref="4">
    <original>N</original>
    <variation>D</variation>
    <location>
        <position position="11"/>
    </location>
</feature>
<organism>
    <name type="scientific">Arabidopsis thaliana</name>
    <name type="common">Mouse-ear cress</name>
    <dbReference type="NCBI Taxonomy" id="3702"/>
    <lineage>
        <taxon>Eukaryota</taxon>
        <taxon>Viridiplantae</taxon>
        <taxon>Streptophyta</taxon>
        <taxon>Embryophyta</taxon>
        <taxon>Tracheophyta</taxon>
        <taxon>Spermatophyta</taxon>
        <taxon>Magnoliopsida</taxon>
        <taxon>eudicotyledons</taxon>
        <taxon>Gunneridae</taxon>
        <taxon>Pentapetalae</taxon>
        <taxon>rosids</taxon>
        <taxon>malvids</taxon>
        <taxon>Brassicales</taxon>
        <taxon>Brassicaceae</taxon>
        <taxon>Camelineae</taxon>
        <taxon>Arabidopsis</taxon>
    </lineage>
</organism>
<reference key="1">
    <citation type="journal article" date="2001" name="J. Biol. Chem.">
        <title>Chloroplasts have a novel Cpn10 in addition to Cpn20 as co-chaperonins in Arabidopsis thaliana.</title>
        <authorList>
            <person name="Koumoto Y."/>
            <person name="Shimada T."/>
            <person name="Kondo M."/>
            <person name="Hara-Nishimura I."/>
            <person name="Nishimura M."/>
        </authorList>
    </citation>
    <scope>NUCLEOTIDE SEQUENCE [MRNA]</scope>
    <scope>FUNCTION</scope>
    <scope>SUBCELLULAR LOCATION</scope>
    <scope>TISSUE SPECIFICITY</scope>
</reference>
<reference key="2">
    <citation type="journal article" date="1999" name="Nature">
        <title>Sequence and analysis of chromosome 2 of the plant Arabidopsis thaliana.</title>
        <authorList>
            <person name="Lin X."/>
            <person name="Kaul S."/>
            <person name="Rounsley S.D."/>
            <person name="Shea T.P."/>
            <person name="Benito M.-I."/>
            <person name="Town C.D."/>
            <person name="Fujii C.Y."/>
            <person name="Mason T.M."/>
            <person name="Bowman C.L."/>
            <person name="Barnstead M.E."/>
            <person name="Feldblyum T.V."/>
            <person name="Buell C.R."/>
            <person name="Ketchum K.A."/>
            <person name="Lee J.J."/>
            <person name="Ronning C.M."/>
            <person name="Koo H.L."/>
            <person name="Moffat K.S."/>
            <person name="Cronin L.A."/>
            <person name="Shen M."/>
            <person name="Pai G."/>
            <person name="Van Aken S."/>
            <person name="Umayam L."/>
            <person name="Tallon L.J."/>
            <person name="Gill J.E."/>
            <person name="Adams M.D."/>
            <person name="Carrera A.J."/>
            <person name="Creasy T.H."/>
            <person name="Goodman H.M."/>
            <person name="Somerville C.R."/>
            <person name="Copenhaver G.P."/>
            <person name="Preuss D."/>
            <person name="Nierman W.C."/>
            <person name="White O."/>
            <person name="Eisen J.A."/>
            <person name="Salzberg S.L."/>
            <person name="Fraser C.M."/>
            <person name="Venter J.C."/>
        </authorList>
    </citation>
    <scope>NUCLEOTIDE SEQUENCE [LARGE SCALE GENOMIC DNA]</scope>
    <source>
        <strain>cv. Columbia</strain>
    </source>
</reference>
<reference key="3">
    <citation type="journal article" date="2017" name="Plant J.">
        <title>Araport11: a complete reannotation of the Arabidopsis thaliana reference genome.</title>
        <authorList>
            <person name="Cheng C.Y."/>
            <person name="Krishnakumar V."/>
            <person name="Chan A.P."/>
            <person name="Thibaud-Nissen F."/>
            <person name="Schobel S."/>
            <person name="Town C.D."/>
        </authorList>
    </citation>
    <scope>GENOME REANNOTATION</scope>
    <source>
        <strain>cv. Columbia</strain>
    </source>
</reference>
<reference key="4">
    <citation type="journal article" date="2003" name="Science">
        <title>Empirical analysis of transcriptional activity in the Arabidopsis genome.</title>
        <authorList>
            <person name="Yamada K."/>
            <person name="Lim J."/>
            <person name="Dale J.M."/>
            <person name="Chen H."/>
            <person name="Shinn P."/>
            <person name="Palm C.J."/>
            <person name="Southwick A.M."/>
            <person name="Wu H.C."/>
            <person name="Kim C.J."/>
            <person name="Nguyen M."/>
            <person name="Pham P.K."/>
            <person name="Cheuk R.F."/>
            <person name="Karlin-Newmann G."/>
            <person name="Liu S.X."/>
            <person name="Lam B."/>
            <person name="Sakano H."/>
            <person name="Wu T."/>
            <person name="Yu G."/>
            <person name="Miranda M."/>
            <person name="Quach H.L."/>
            <person name="Tripp M."/>
            <person name="Chang C.H."/>
            <person name="Lee J.M."/>
            <person name="Toriumi M.J."/>
            <person name="Chan M.M."/>
            <person name="Tang C.C."/>
            <person name="Onodera C.S."/>
            <person name="Deng J.M."/>
            <person name="Akiyama K."/>
            <person name="Ansari Y."/>
            <person name="Arakawa T."/>
            <person name="Banh J."/>
            <person name="Banno F."/>
            <person name="Bowser L."/>
            <person name="Brooks S.Y."/>
            <person name="Carninci P."/>
            <person name="Chao Q."/>
            <person name="Choy N."/>
            <person name="Enju A."/>
            <person name="Goldsmith A.D."/>
            <person name="Gurjal M."/>
            <person name="Hansen N.F."/>
            <person name="Hayashizaki Y."/>
            <person name="Johnson-Hopson C."/>
            <person name="Hsuan V.W."/>
            <person name="Iida K."/>
            <person name="Karnes M."/>
            <person name="Khan S."/>
            <person name="Koesema E."/>
            <person name="Ishida J."/>
            <person name="Jiang P.X."/>
            <person name="Jones T."/>
            <person name="Kawai J."/>
            <person name="Kamiya A."/>
            <person name="Meyers C."/>
            <person name="Nakajima M."/>
            <person name="Narusaka M."/>
            <person name="Seki M."/>
            <person name="Sakurai T."/>
            <person name="Satou M."/>
            <person name="Tamse R."/>
            <person name="Vaysberg M."/>
            <person name="Wallender E.K."/>
            <person name="Wong C."/>
            <person name="Yamamura Y."/>
            <person name="Yuan S."/>
            <person name="Shinozaki K."/>
            <person name="Davis R.W."/>
            <person name="Theologis A."/>
            <person name="Ecker J.R."/>
        </authorList>
    </citation>
    <scope>NUCLEOTIDE SEQUENCE [LARGE SCALE MRNA]</scope>
    <source>
        <strain>cv. Columbia</strain>
    </source>
</reference>
<reference key="5">
    <citation type="journal article" date="2013" name="Plant Mol. Biol.">
        <title>Cochaperonin CPN20 negatively regulates abscisic acid signaling in Arabidopsis.</title>
        <authorList>
            <person name="Zhang X.F."/>
            <person name="Jiang T."/>
            <person name="Wu Z."/>
            <person name="Du S.Y."/>
            <person name="Yu Y.T."/>
            <person name="Jiang S.C."/>
            <person name="Lu K."/>
            <person name="Feng X.J."/>
            <person name="Wang X.F."/>
            <person name="Zhang D.P."/>
        </authorList>
    </citation>
    <scope>TISSUE SPECIFICITY</scope>
</reference>